<keyword id="KW-0249">Electron transport</keyword>
<keyword id="KW-0472">Membrane</keyword>
<keyword id="KW-0496">Mitochondrion</keyword>
<keyword id="KW-0999">Mitochondrion inner membrane</keyword>
<keyword id="KW-0520">NAD</keyword>
<keyword id="KW-0679">Respiratory chain</keyword>
<keyword id="KW-1278">Translocase</keyword>
<keyword id="KW-0812">Transmembrane</keyword>
<keyword id="KW-1133">Transmembrane helix</keyword>
<keyword id="KW-0813">Transport</keyword>
<keyword id="KW-0830">Ubiquinone</keyword>
<feature type="chain" id="PRO_0000117469" description="NADH-ubiquinone oxidoreductase chain 1">
    <location>
        <begin position="1"/>
        <end position="313"/>
    </location>
</feature>
<feature type="transmembrane region" description="Helical" evidence="2">
    <location>
        <begin position="2"/>
        <end position="22"/>
    </location>
</feature>
<feature type="transmembrane region" description="Helical" evidence="2">
    <location>
        <begin position="71"/>
        <end position="91"/>
    </location>
</feature>
<feature type="transmembrane region" description="Helical" evidence="2">
    <location>
        <begin position="103"/>
        <end position="123"/>
    </location>
</feature>
<feature type="transmembrane region" description="Helical" evidence="2">
    <location>
        <begin position="138"/>
        <end position="158"/>
    </location>
</feature>
<feature type="transmembrane region" description="Helical" evidence="2">
    <location>
        <begin position="173"/>
        <end position="193"/>
    </location>
</feature>
<feature type="transmembrane region" description="Helical" evidence="2">
    <location>
        <begin position="220"/>
        <end position="240"/>
    </location>
</feature>
<feature type="transmembrane region" description="Helical" evidence="2">
    <location>
        <begin position="243"/>
        <end position="263"/>
    </location>
</feature>
<feature type="transmembrane region" description="Helical" evidence="2">
    <location>
        <begin position="289"/>
        <end position="309"/>
    </location>
</feature>
<name>NU1M_RHISA</name>
<reference key="1">
    <citation type="journal article" date="1998" name="Mol. Biol. Evol.">
        <title>Mitochondrial gene order is not conserved in arthropods: prostriate and metastriate tick mitochondrial genomes.</title>
        <authorList>
            <person name="Black W.C. IV"/>
            <person name="Roehrdanz R.L."/>
        </authorList>
    </citation>
    <scope>NUCLEOTIDE SEQUENCE [GENOMIC DNA]</scope>
</reference>
<comment type="function">
    <text evidence="1">Core subunit of the mitochondrial membrane respiratory chain NADH dehydrogenase (Complex I) that is believed to belong to the minimal assembly required for catalysis. Complex I functions in the transfer of electrons from NADH to the respiratory chain. The immediate electron acceptor for the enzyme is believed to be ubiquinone (By similarity).</text>
</comment>
<comment type="catalytic activity">
    <reaction>
        <text>a ubiquinone + NADH + 5 H(+)(in) = a ubiquinol + NAD(+) + 4 H(+)(out)</text>
        <dbReference type="Rhea" id="RHEA:29091"/>
        <dbReference type="Rhea" id="RHEA-COMP:9565"/>
        <dbReference type="Rhea" id="RHEA-COMP:9566"/>
        <dbReference type="ChEBI" id="CHEBI:15378"/>
        <dbReference type="ChEBI" id="CHEBI:16389"/>
        <dbReference type="ChEBI" id="CHEBI:17976"/>
        <dbReference type="ChEBI" id="CHEBI:57540"/>
        <dbReference type="ChEBI" id="CHEBI:57945"/>
        <dbReference type="EC" id="7.1.1.2"/>
    </reaction>
</comment>
<comment type="subcellular location">
    <subcellularLocation>
        <location evidence="1">Mitochondrion inner membrane</location>
        <topology evidence="1">Multi-pass membrane protein</topology>
    </subcellularLocation>
</comment>
<comment type="similarity">
    <text evidence="3">Belongs to the complex I subunit 1 family.</text>
</comment>
<geneLocation type="mitochondrion"/>
<sequence>MILNFIYYFILILMVLLSIAFFTLMERKFLGYCHIRKGPNKTGAMGLLQPISDALKLFSKEMNKMFYMNKFIQIISPLIMILMMMMMWMIFYFSNNALNLNMSIIFFLCISSLASYAILFSGWSSNSKYSLIGSYRGFAQVISYEVSMAMILISLAIIPQSYNFISFLKIQETFPLIFSFLPIFIIWIITVLAELNRVPFDLAEGESELVSGFNIEYGSWLFAIIFMSEYGDIMMISFLTYYLFLGLKNLILFFVLILMTMIIMIRGTYVRMRYDQLMMMAWKMILPQSIIFLFLSYFIFLNINNFICINFCN</sequence>
<dbReference type="EC" id="7.1.1.2"/>
<dbReference type="EMBL" id="AF081829">
    <property type="protein sequence ID" value="AAD05524.1"/>
    <property type="molecule type" value="Genomic_DNA"/>
</dbReference>
<dbReference type="PIR" id="T11160">
    <property type="entry name" value="T11160"/>
</dbReference>
<dbReference type="RefSeq" id="NP_008517.1">
    <property type="nucleotide sequence ID" value="NC_002074.1"/>
</dbReference>
<dbReference type="SMR" id="O99824"/>
<dbReference type="GeneID" id="808372"/>
<dbReference type="KEGG" id="rsan:808372"/>
<dbReference type="CTD" id="4535"/>
<dbReference type="OrthoDB" id="6515089at2759"/>
<dbReference type="GO" id="GO:0005743">
    <property type="term" value="C:mitochondrial inner membrane"/>
    <property type="evidence" value="ECO:0007669"/>
    <property type="project" value="UniProtKB-SubCell"/>
</dbReference>
<dbReference type="GO" id="GO:0008137">
    <property type="term" value="F:NADH dehydrogenase (ubiquinone) activity"/>
    <property type="evidence" value="ECO:0007669"/>
    <property type="project" value="UniProtKB-EC"/>
</dbReference>
<dbReference type="GO" id="GO:0009060">
    <property type="term" value="P:aerobic respiration"/>
    <property type="evidence" value="ECO:0007669"/>
    <property type="project" value="TreeGrafter"/>
</dbReference>
<dbReference type="HAMAP" id="MF_01350">
    <property type="entry name" value="NDH1_NuoH"/>
    <property type="match status" value="1"/>
</dbReference>
<dbReference type="InterPro" id="IPR001694">
    <property type="entry name" value="NADH_UbQ_OxRdtase_su1/FPO"/>
</dbReference>
<dbReference type="InterPro" id="IPR018086">
    <property type="entry name" value="NADH_UbQ_OxRdtase_su1_CS"/>
</dbReference>
<dbReference type="PANTHER" id="PTHR11432">
    <property type="entry name" value="NADH DEHYDROGENASE SUBUNIT 1"/>
    <property type="match status" value="1"/>
</dbReference>
<dbReference type="PANTHER" id="PTHR11432:SF3">
    <property type="entry name" value="NADH-UBIQUINONE OXIDOREDUCTASE CHAIN 1"/>
    <property type="match status" value="1"/>
</dbReference>
<dbReference type="Pfam" id="PF00146">
    <property type="entry name" value="NADHdh"/>
    <property type="match status" value="1"/>
</dbReference>
<dbReference type="PROSITE" id="PS00667">
    <property type="entry name" value="COMPLEX1_ND1_1"/>
    <property type="match status" value="1"/>
</dbReference>
<dbReference type="PROSITE" id="PS00668">
    <property type="entry name" value="COMPLEX1_ND1_2"/>
    <property type="match status" value="1"/>
</dbReference>
<gene>
    <name type="primary">ND1</name>
</gene>
<proteinExistence type="inferred from homology"/>
<protein>
    <recommendedName>
        <fullName>NADH-ubiquinone oxidoreductase chain 1</fullName>
        <ecNumber>7.1.1.2</ecNumber>
    </recommendedName>
    <alternativeName>
        <fullName>NADH dehydrogenase subunit 1</fullName>
    </alternativeName>
</protein>
<evidence type="ECO:0000250" key="1"/>
<evidence type="ECO:0000255" key="2"/>
<evidence type="ECO:0000305" key="3"/>
<organism>
    <name type="scientific">Rhipicephalus sanguineus</name>
    <name type="common">Brown dog tick</name>
    <name type="synonym">Ixodes sanguineus</name>
    <dbReference type="NCBI Taxonomy" id="34632"/>
    <lineage>
        <taxon>Eukaryota</taxon>
        <taxon>Metazoa</taxon>
        <taxon>Ecdysozoa</taxon>
        <taxon>Arthropoda</taxon>
        <taxon>Chelicerata</taxon>
        <taxon>Arachnida</taxon>
        <taxon>Acari</taxon>
        <taxon>Parasitiformes</taxon>
        <taxon>Ixodida</taxon>
        <taxon>Ixodoidea</taxon>
        <taxon>Ixodidae</taxon>
        <taxon>Rhipicephalinae</taxon>
        <taxon>Rhipicephalus</taxon>
        <taxon>Rhipicephalus</taxon>
    </lineage>
</organism>
<accession>O99824</accession>